<accession>A6U172</accession>
<name>HSLU_STAA2</name>
<organism>
    <name type="scientific">Staphylococcus aureus (strain JH1)</name>
    <dbReference type="NCBI Taxonomy" id="359787"/>
    <lineage>
        <taxon>Bacteria</taxon>
        <taxon>Bacillati</taxon>
        <taxon>Bacillota</taxon>
        <taxon>Bacilli</taxon>
        <taxon>Bacillales</taxon>
        <taxon>Staphylococcaceae</taxon>
        <taxon>Staphylococcus</taxon>
    </lineage>
</organism>
<sequence length="467" mass="52315">MDTAGIRLTPKEIVSKLNEYIVGQNDAKRKVAIALRNRYRRSLLDEESKQEISPKNILMIGPTGVGKTEIARRMAKVVGAPFIKVEATKFTEVGYVGRDVESMVRDLVDVSVRLVKAQKKSLVQDEATAKANEKLVKLLVPSMKKKASQTNNPLESLFGGAIPNFGQNNEDEEEPPTEEIKTKRSEIKRQLEEGKLEKEKVRIKVEQDPGALGMLGTNQNQQMQEMMNQLMPKKKVEREVAVETARKILADSYADELIDQESANQEALELAEQMGIIFIDEIDKVATNNHNSGQDVSRQGVQRDILPILEGSVIQTKYGTVNTEHMLFIGAGAFHVSKPSDLIPELQGRFPIRVELDSLSVEDFVRILTEPKLSLIKQYEALLQTEEVTVNFTDEAITRLAEIAYQVNQDTDNIGARRLHTILEKMLEDLSFEAPSMPNAVVDITPQYVDDKLKSISTNKDLSAFIL</sequence>
<evidence type="ECO:0000255" key="1">
    <source>
        <dbReference type="HAMAP-Rule" id="MF_00249"/>
    </source>
</evidence>
<evidence type="ECO:0000256" key="2">
    <source>
        <dbReference type="SAM" id="MobiDB-lite"/>
    </source>
</evidence>
<proteinExistence type="inferred from homology"/>
<protein>
    <recommendedName>
        <fullName evidence="1">ATP-dependent protease ATPase subunit HslU</fullName>
    </recommendedName>
    <alternativeName>
        <fullName evidence="1">Unfoldase HslU</fullName>
    </alternativeName>
</protein>
<gene>
    <name evidence="1" type="primary">hslU</name>
    <name type="ordered locus">SaurJH1_1339</name>
</gene>
<reference key="1">
    <citation type="submission" date="2007-06" db="EMBL/GenBank/DDBJ databases">
        <title>Complete sequence of chromosome of Staphylococcus aureus subsp. aureus JH1.</title>
        <authorList>
            <consortium name="US DOE Joint Genome Institute"/>
            <person name="Copeland A."/>
            <person name="Lucas S."/>
            <person name="Lapidus A."/>
            <person name="Barry K."/>
            <person name="Detter J.C."/>
            <person name="Glavina del Rio T."/>
            <person name="Hammon N."/>
            <person name="Israni S."/>
            <person name="Dalin E."/>
            <person name="Tice H."/>
            <person name="Pitluck S."/>
            <person name="Chain P."/>
            <person name="Malfatti S."/>
            <person name="Shin M."/>
            <person name="Vergez L."/>
            <person name="Schmutz J."/>
            <person name="Larimer F."/>
            <person name="Land M."/>
            <person name="Hauser L."/>
            <person name="Kyrpides N."/>
            <person name="Ivanova N."/>
            <person name="Tomasz A."/>
            <person name="Richardson P."/>
        </authorList>
    </citation>
    <scope>NUCLEOTIDE SEQUENCE [LARGE SCALE GENOMIC DNA]</scope>
    <source>
        <strain>JH1</strain>
    </source>
</reference>
<dbReference type="EMBL" id="CP000736">
    <property type="protein sequence ID" value="ABR52190.1"/>
    <property type="molecule type" value="Genomic_DNA"/>
</dbReference>
<dbReference type="SMR" id="A6U172"/>
<dbReference type="KEGG" id="sah:SaurJH1_1339"/>
<dbReference type="HOGENOM" id="CLU_033123_0_0_9"/>
<dbReference type="GO" id="GO:0009376">
    <property type="term" value="C:HslUV protease complex"/>
    <property type="evidence" value="ECO:0007669"/>
    <property type="project" value="UniProtKB-UniRule"/>
</dbReference>
<dbReference type="GO" id="GO:0005524">
    <property type="term" value="F:ATP binding"/>
    <property type="evidence" value="ECO:0007669"/>
    <property type="project" value="UniProtKB-UniRule"/>
</dbReference>
<dbReference type="GO" id="GO:0016887">
    <property type="term" value="F:ATP hydrolysis activity"/>
    <property type="evidence" value="ECO:0007669"/>
    <property type="project" value="InterPro"/>
</dbReference>
<dbReference type="GO" id="GO:0008233">
    <property type="term" value="F:peptidase activity"/>
    <property type="evidence" value="ECO:0007669"/>
    <property type="project" value="InterPro"/>
</dbReference>
<dbReference type="GO" id="GO:0036402">
    <property type="term" value="F:proteasome-activating activity"/>
    <property type="evidence" value="ECO:0007669"/>
    <property type="project" value="UniProtKB-UniRule"/>
</dbReference>
<dbReference type="GO" id="GO:0043335">
    <property type="term" value="P:protein unfolding"/>
    <property type="evidence" value="ECO:0007669"/>
    <property type="project" value="UniProtKB-UniRule"/>
</dbReference>
<dbReference type="GO" id="GO:0051603">
    <property type="term" value="P:proteolysis involved in protein catabolic process"/>
    <property type="evidence" value="ECO:0007669"/>
    <property type="project" value="TreeGrafter"/>
</dbReference>
<dbReference type="CDD" id="cd19498">
    <property type="entry name" value="RecA-like_HslU"/>
    <property type="match status" value="1"/>
</dbReference>
<dbReference type="FunFam" id="3.40.50.300:FF:000220">
    <property type="entry name" value="ATP-dependent protease ATPase subunit HslU"/>
    <property type="match status" value="1"/>
</dbReference>
<dbReference type="Gene3D" id="1.10.8.60">
    <property type="match status" value="1"/>
</dbReference>
<dbReference type="Gene3D" id="1.10.8.10">
    <property type="entry name" value="DNA helicase RuvA subunit, C-terminal domain"/>
    <property type="match status" value="1"/>
</dbReference>
<dbReference type="Gene3D" id="3.40.50.300">
    <property type="entry name" value="P-loop containing nucleotide triphosphate hydrolases"/>
    <property type="match status" value="2"/>
</dbReference>
<dbReference type="HAMAP" id="MF_00249">
    <property type="entry name" value="HslU"/>
    <property type="match status" value="1"/>
</dbReference>
<dbReference type="InterPro" id="IPR003593">
    <property type="entry name" value="AAA+_ATPase"/>
</dbReference>
<dbReference type="InterPro" id="IPR050052">
    <property type="entry name" value="ATP-dep_Clp_protease_ClpX"/>
</dbReference>
<dbReference type="InterPro" id="IPR003959">
    <property type="entry name" value="ATPase_AAA_core"/>
</dbReference>
<dbReference type="InterPro" id="IPR019489">
    <property type="entry name" value="Clp_ATPase_C"/>
</dbReference>
<dbReference type="InterPro" id="IPR004491">
    <property type="entry name" value="HslU"/>
</dbReference>
<dbReference type="InterPro" id="IPR027417">
    <property type="entry name" value="P-loop_NTPase"/>
</dbReference>
<dbReference type="NCBIfam" id="TIGR00390">
    <property type="entry name" value="hslU"/>
    <property type="match status" value="1"/>
</dbReference>
<dbReference type="NCBIfam" id="NF003544">
    <property type="entry name" value="PRK05201.1"/>
    <property type="match status" value="1"/>
</dbReference>
<dbReference type="PANTHER" id="PTHR48102">
    <property type="entry name" value="ATP-DEPENDENT CLP PROTEASE ATP-BINDING SUBUNIT CLPX-LIKE, MITOCHONDRIAL-RELATED"/>
    <property type="match status" value="1"/>
</dbReference>
<dbReference type="PANTHER" id="PTHR48102:SF3">
    <property type="entry name" value="ATP-DEPENDENT PROTEASE ATPASE SUBUNIT HSLU"/>
    <property type="match status" value="1"/>
</dbReference>
<dbReference type="Pfam" id="PF00004">
    <property type="entry name" value="AAA"/>
    <property type="match status" value="1"/>
</dbReference>
<dbReference type="Pfam" id="PF07724">
    <property type="entry name" value="AAA_2"/>
    <property type="match status" value="1"/>
</dbReference>
<dbReference type="Pfam" id="PF10431">
    <property type="entry name" value="ClpB_D2-small"/>
    <property type="match status" value="1"/>
</dbReference>
<dbReference type="SMART" id="SM00382">
    <property type="entry name" value="AAA"/>
    <property type="match status" value="1"/>
</dbReference>
<dbReference type="SMART" id="SM01086">
    <property type="entry name" value="ClpB_D2-small"/>
    <property type="match status" value="1"/>
</dbReference>
<dbReference type="SUPFAM" id="SSF52540">
    <property type="entry name" value="P-loop containing nucleoside triphosphate hydrolases"/>
    <property type="match status" value="1"/>
</dbReference>
<feature type="chain" id="PRO_1000078458" description="ATP-dependent protease ATPase subunit HslU">
    <location>
        <begin position="1"/>
        <end position="467"/>
    </location>
</feature>
<feature type="region of interest" description="Disordered" evidence="2">
    <location>
        <begin position="149"/>
        <end position="192"/>
    </location>
</feature>
<feature type="compositionally biased region" description="Basic and acidic residues" evidence="2">
    <location>
        <begin position="178"/>
        <end position="192"/>
    </location>
</feature>
<feature type="binding site" evidence="1">
    <location>
        <position position="22"/>
    </location>
    <ligand>
        <name>ATP</name>
        <dbReference type="ChEBI" id="CHEBI:30616"/>
    </ligand>
</feature>
<feature type="binding site" evidence="1">
    <location>
        <begin position="64"/>
        <end position="69"/>
    </location>
    <ligand>
        <name>ATP</name>
        <dbReference type="ChEBI" id="CHEBI:30616"/>
    </ligand>
</feature>
<feature type="binding site" evidence="1">
    <location>
        <position position="280"/>
    </location>
    <ligand>
        <name>ATP</name>
        <dbReference type="ChEBI" id="CHEBI:30616"/>
    </ligand>
</feature>
<feature type="binding site" evidence="1">
    <location>
        <position position="345"/>
    </location>
    <ligand>
        <name>ATP</name>
        <dbReference type="ChEBI" id="CHEBI:30616"/>
    </ligand>
</feature>
<feature type="binding site" evidence="1">
    <location>
        <position position="417"/>
    </location>
    <ligand>
        <name>ATP</name>
        <dbReference type="ChEBI" id="CHEBI:30616"/>
    </ligand>
</feature>
<comment type="function">
    <text evidence="1">ATPase subunit of a proteasome-like degradation complex; this subunit has chaperone activity. The binding of ATP and its subsequent hydrolysis by HslU are essential for unfolding of protein substrates subsequently hydrolyzed by HslV. HslU recognizes the N-terminal part of its protein substrates and unfolds these before they are guided to HslV for hydrolysis.</text>
</comment>
<comment type="subunit">
    <text evidence="1">A double ring-shaped homohexamer of HslV is capped on each side by a ring-shaped HslU homohexamer. The assembly of the HslU/HslV complex is dependent on binding of ATP.</text>
</comment>
<comment type="subcellular location">
    <subcellularLocation>
        <location evidence="1">Cytoplasm</location>
    </subcellularLocation>
</comment>
<comment type="similarity">
    <text evidence="1">Belongs to the ClpX chaperone family. HslU subfamily.</text>
</comment>
<keyword id="KW-0067">ATP-binding</keyword>
<keyword id="KW-0143">Chaperone</keyword>
<keyword id="KW-0963">Cytoplasm</keyword>
<keyword id="KW-0547">Nucleotide-binding</keyword>
<keyword id="KW-0346">Stress response</keyword>